<name>HSLV_ANAD2</name>
<sequence length="181" mass="19409">MRPMHGTTVLCVRREGRVVIAGDGQVTLDKTVMKATARKVRRLGEGQVVAGFAGATADAFQLFELFEKKLKEHARSLPRAAVELAKQWRTDRMLRRLEALLLVADREHLLVLSGAGDVIEPDPVANGAAAAIGSGGPYALAAARALLAHSALDARQVAEEAMKLAAEICIYTNGNLTIEEL</sequence>
<feature type="chain" id="PRO_1000192665" description="ATP-dependent protease subunit HslV">
    <location>
        <begin position="1"/>
        <end position="181"/>
    </location>
</feature>
<feature type="active site" evidence="1">
    <location>
        <position position="7"/>
    </location>
</feature>
<feature type="binding site" evidence="1">
    <location>
        <position position="166"/>
    </location>
    <ligand>
        <name>Na(+)</name>
        <dbReference type="ChEBI" id="CHEBI:29101"/>
    </ligand>
</feature>
<feature type="binding site" evidence="1">
    <location>
        <position position="169"/>
    </location>
    <ligand>
        <name>Na(+)</name>
        <dbReference type="ChEBI" id="CHEBI:29101"/>
    </ligand>
</feature>
<feature type="binding site" evidence="1">
    <location>
        <position position="172"/>
    </location>
    <ligand>
        <name>Na(+)</name>
        <dbReference type="ChEBI" id="CHEBI:29101"/>
    </ligand>
</feature>
<proteinExistence type="inferred from homology"/>
<gene>
    <name evidence="1" type="primary">hslV</name>
    <name type="ordered locus">A2cp1_2880</name>
</gene>
<keyword id="KW-0021">Allosteric enzyme</keyword>
<keyword id="KW-0963">Cytoplasm</keyword>
<keyword id="KW-0378">Hydrolase</keyword>
<keyword id="KW-0479">Metal-binding</keyword>
<keyword id="KW-0645">Protease</keyword>
<keyword id="KW-0915">Sodium</keyword>
<keyword id="KW-0888">Threonine protease</keyword>
<comment type="function">
    <text evidence="1">Protease subunit of a proteasome-like degradation complex believed to be a general protein degrading machinery.</text>
</comment>
<comment type="catalytic activity">
    <reaction evidence="1">
        <text>ATP-dependent cleavage of peptide bonds with broad specificity.</text>
        <dbReference type="EC" id="3.4.25.2"/>
    </reaction>
</comment>
<comment type="activity regulation">
    <text evidence="1">Allosterically activated by HslU binding.</text>
</comment>
<comment type="subunit">
    <text evidence="1">A double ring-shaped homohexamer of HslV is capped on each side by a ring-shaped HslU homohexamer. The assembly of the HslU/HslV complex is dependent on binding of ATP.</text>
</comment>
<comment type="subcellular location">
    <subcellularLocation>
        <location evidence="1">Cytoplasm</location>
    </subcellularLocation>
</comment>
<comment type="similarity">
    <text evidence="1">Belongs to the peptidase T1B family. HslV subfamily.</text>
</comment>
<organism>
    <name type="scientific">Anaeromyxobacter dehalogenans (strain 2CP-1 / ATCC BAA-258)</name>
    <dbReference type="NCBI Taxonomy" id="455488"/>
    <lineage>
        <taxon>Bacteria</taxon>
        <taxon>Pseudomonadati</taxon>
        <taxon>Myxococcota</taxon>
        <taxon>Myxococcia</taxon>
        <taxon>Myxococcales</taxon>
        <taxon>Cystobacterineae</taxon>
        <taxon>Anaeromyxobacteraceae</taxon>
        <taxon>Anaeromyxobacter</taxon>
    </lineage>
</organism>
<protein>
    <recommendedName>
        <fullName evidence="1">ATP-dependent protease subunit HslV</fullName>
        <ecNumber evidence="1">3.4.25.2</ecNumber>
    </recommendedName>
</protein>
<accession>B8JES1</accession>
<dbReference type="EC" id="3.4.25.2" evidence="1"/>
<dbReference type="EMBL" id="CP001359">
    <property type="protein sequence ID" value="ACL66217.1"/>
    <property type="molecule type" value="Genomic_DNA"/>
</dbReference>
<dbReference type="RefSeq" id="WP_012526792.1">
    <property type="nucleotide sequence ID" value="NC_011891.1"/>
</dbReference>
<dbReference type="SMR" id="B8JES1"/>
<dbReference type="MEROPS" id="T01.006"/>
<dbReference type="KEGG" id="acp:A2cp1_2880"/>
<dbReference type="HOGENOM" id="CLU_093872_1_0_7"/>
<dbReference type="Proteomes" id="UP000007089">
    <property type="component" value="Chromosome"/>
</dbReference>
<dbReference type="GO" id="GO:0009376">
    <property type="term" value="C:HslUV protease complex"/>
    <property type="evidence" value="ECO:0007669"/>
    <property type="project" value="UniProtKB-UniRule"/>
</dbReference>
<dbReference type="GO" id="GO:0005839">
    <property type="term" value="C:proteasome core complex"/>
    <property type="evidence" value="ECO:0007669"/>
    <property type="project" value="InterPro"/>
</dbReference>
<dbReference type="GO" id="GO:0046872">
    <property type="term" value="F:metal ion binding"/>
    <property type="evidence" value="ECO:0007669"/>
    <property type="project" value="UniProtKB-KW"/>
</dbReference>
<dbReference type="GO" id="GO:0004298">
    <property type="term" value="F:threonine-type endopeptidase activity"/>
    <property type="evidence" value="ECO:0007669"/>
    <property type="project" value="UniProtKB-KW"/>
</dbReference>
<dbReference type="GO" id="GO:0051603">
    <property type="term" value="P:proteolysis involved in protein catabolic process"/>
    <property type="evidence" value="ECO:0007669"/>
    <property type="project" value="InterPro"/>
</dbReference>
<dbReference type="Gene3D" id="3.60.20.10">
    <property type="entry name" value="Glutamine Phosphoribosylpyrophosphate, subunit 1, domain 1"/>
    <property type="match status" value="1"/>
</dbReference>
<dbReference type="HAMAP" id="MF_00248">
    <property type="entry name" value="HslV"/>
    <property type="match status" value="1"/>
</dbReference>
<dbReference type="InterPro" id="IPR022281">
    <property type="entry name" value="ATP-dep_Prtase_HsIV_su"/>
</dbReference>
<dbReference type="InterPro" id="IPR029055">
    <property type="entry name" value="Ntn_hydrolases_N"/>
</dbReference>
<dbReference type="InterPro" id="IPR001353">
    <property type="entry name" value="Proteasome_sua/b"/>
</dbReference>
<dbReference type="InterPro" id="IPR023333">
    <property type="entry name" value="Proteasome_suB-type"/>
</dbReference>
<dbReference type="NCBIfam" id="TIGR03692">
    <property type="entry name" value="ATP_dep_HslV"/>
    <property type="match status" value="1"/>
</dbReference>
<dbReference type="NCBIfam" id="NF003964">
    <property type="entry name" value="PRK05456.1"/>
    <property type="match status" value="1"/>
</dbReference>
<dbReference type="PANTHER" id="PTHR32194:SF0">
    <property type="entry name" value="ATP-DEPENDENT PROTEASE SUBUNIT HSLV"/>
    <property type="match status" value="1"/>
</dbReference>
<dbReference type="PANTHER" id="PTHR32194">
    <property type="entry name" value="METALLOPROTEASE TLDD"/>
    <property type="match status" value="1"/>
</dbReference>
<dbReference type="Pfam" id="PF00227">
    <property type="entry name" value="Proteasome"/>
    <property type="match status" value="1"/>
</dbReference>
<dbReference type="PIRSF" id="PIRSF039093">
    <property type="entry name" value="HslV"/>
    <property type="match status" value="1"/>
</dbReference>
<dbReference type="SUPFAM" id="SSF56235">
    <property type="entry name" value="N-terminal nucleophile aminohydrolases (Ntn hydrolases)"/>
    <property type="match status" value="1"/>
</dbReference>
<dbReference type="PROSITE" id="PS51476">
    <property type="entry name" value="PROTEASOME_BETA_2"/>
    <property type="match status" value="1"/>
</dbReference>
<evidence type="ECO:0000255" key="1">
    <source>
        <dbReference type="HAMAP-Rule" id="MF_00248"/>
    </source>
</evidence>
<reference key="1">
    <citation type="submission" date="2009-01" db="EMBL/GenBank/DDBJ databases">
        <title>Complete sequence of Anaeromyxobacter dehalogenans 2CP-1.</title>
        <authorList>
            <person name="Lucas S."/>
            <person name="Copeland A."/>
            <person name="Lapidus A."/>
            <person name="Glavina del Rio T."/>
            <person name="Dalin E."/>
            <person name="Tice H."/>
            <person name="Bruce D."/>
            <person name="Goodwin L."/>
            <person name="Pitluck S."/>
            <person name="Saunders E."/>
            <person name="Brettin T."/>
            <person name="Detter J.C."/>
            <person name="Han C."/>
            <person name="Larimer F."/>
            <person name="Land M."/>
            <person name="Hauser L."/>
            <person name="Kyrpides N."/>
            <person name="Ovchinnikova G."/>
            <person name="Beliaev A.S."/>
            <person name="Richardson P."/>
        </authorList>
    </citation>
    <scope>NUCLEOTIDE SEQUENCE [LARGE SCALE GENOMIC DNA]</scope>
    <source>
        <strain>2CP-1 / ATCC BAA-258</strain>
    </source>
</reference>